<organism>
    <name type="scientific">Xenopus laevis</name>
    <name type="common">African clawed frog</name>
    <dbReference type="NCBI Taxonomy" id="8355"/>
    <lineage>
        <taxon>Eukaryota</taxon>
        <taxon>Metazoa</taxon>
        <taxon>Chordata</taxon>
        <taxon>Craniata</taxon>
        <taxon>Vertebrata</taxon>
        <taxon>Euteleostomi</taxon>
        <taxon>Amphibia</taxon>
        <taxon>Batrachia</taxon>
        <taxon>Anura</taxon>
        <taxon>Pipoidea</taxon>
        <taxon>Pipidae</taxon>
        <taxon>Xenopodinae</taxon>
        <taxon>Xenopus</taxon>
        <taxon>Xenopus</taxon>
    </lineage>
</organism>
<keyword id="KW-0479">Metal-binding</keyword>
<keyword id="KW-0539">Nucleus</keyword>
<keyword id="KW-1185">Reference proteome</keyword>
<keyword id="KW-0862">Zinc</keyword>
<keyword id="KW-0863">Zinc-finger</keyword>
<reference key="1">
    <citation type="journal article" date="1999" name="EMBO J.">
        <title>Nuclear import of RPA in Xenopus egg extracts requires a novel protein XRIPalpha but not importin alpha.</title>
        <authorList>
            <person name="Jullien D."/>
            <person name="Goerlich D."/>
            <person name="Laemmli U.K."/>
            <person name="Adachi Y."/>
        </authorList>
    </citation>
    <scope>NUCLEOTIDE SEQUENCE [MRNA]</scope>
    <scope>FUNCTION</scope>
    <scope>SUBCELLULAR LOCATION</scope>
    <scope>INTERACTION WITH IMPORTIN BETA AND RPA1</scope>
</reference>
<reference key="2">
    <citation type="submission" date="2004-06" db="EMBL/GenBank/DDBJ databases">
        <authorList>
            <consortium name="NIH - Xenopus Gene Collection (XGC) project"/>
        </authorList>
    </citation>
    <scope>NUCLEOTIDE SEQUENCE [LARGE SCALE MRNA]</scope>
    <source>
        <tissue>Oocyte</tissue>
    </source>
</reference>
<protein>
    <recommendedName>
        <fullName>RPA-interacting protein A</fullName>
    </recommendedName>
    <alternativeName>
        <fullName>RPA-interacting protein alpha</fullName>
    </alternativeName>
    <alternativeName>
        <fullName>XRIPalpha</fullName>
    </alternativeName>
</protein>
<gene>
    <name type="primary">rpain-a</name>
    <name type="synonym">rip-a</name>
</gene>
<name>RIPA_XENLA</name>
<accession>Q9W704</accession>
<accession>Q6GMZ2</accession>
<dbReference type="EMBL" id="AJ243177">
    <property type="protein sequence ID" value="CAB45690.1"/>
    <property type="molecule type" value="mRNA"/>
</dbReference>
<dbReference type="EMBL" id="BC073732">
    <property type="protein sequence ID" value="AAH73732.1"/>
    <property type="molecule type" value="mRNA"/>
</dbReference>
<dbReference type="RefSeq" id="NP_001081708.1">
    <property type="nucleotide sequence ID" value="NM_001088239.1"/>
</dbReference>
<dbReference type="DNASU" id="398009"/>
<dbReference type="GeneID" id="398009"/>
<dbReference type="KEGG" id="xla:398009"/>
<dbReference type="AGR" id="Xenbase:XB-GENE-5817283"/>
<dbReference type="CTD" id="398009"/>
<dbReference type="Xenbase" id="XB-GENE-5817283">
    <property type="gene designation" value="rpain.S"/>
</dbReference>
<dbReference type="OMA" id="ACDSWTV"/>
<dbReference type="OrthoDB" id="435311at2759"/>
<dbReference type="Proteomes" id="UP000186698">
    <property type="component" value="Chromosome 2S"/>
</dbReference>
<dbReference type="Bgee" id="398009">
    <property type="expression patterns" value="Expressed in egg cell and 19 other cell types or tissues"/>
</dbReference>
<dbReference type="GO" id="GO:0005634">
    <property type="term" value="C:nucleus"/>
    <property type="evidence" value="ECO:0000318"/>
    <property type="project" value="GO_Central"/>
</dbReference>
<dbReference type="GO" id="GO:0016605">
    <property type="term" value="C:PML body"/>
    <property type="evidence" value="ECO:0007669"/>
    <property type="project" value="TreeGrafter"/>
</dbReference>
<dbReference type="GO" id="GO:0008270">
    <property type="term" value="F:zinc ion binding"/>
    <property type="evidence" value="ECO:0007669"/>
    <property type="project" value="UniProtKB-KW"/>
</dbReference>
<dbReference type="GO" id="GO:0006606">
    <property type="term" value="P:protein import into nucleus"/>
    <property type="evidence" value="ECO:0000318"/>
    <property type="project" value="GO_Central"/>
</dbReference>
<dbReference type="InterPro" id="IPR028156">
    <property type="entry name" value="RIP"/>
</dbReference>
<dbReference type="InterPro" id="IPR028159">
    <property type="entry name" value="RPA_interact_C_dom"/>
</dbReference>
<dbReference type="InterPro" id="IPR028155">
    <property type="entry name" value="RPA_interact_central"/>
</dbReference>
<dbReference type="InterPro" id="IPR028158">
    <property type="entry name" value="RPA_interact_N_dom"/>
</dbReference>
<dbReference type="PANTHER" id="PTHR31742:SF1">
    <property type="entry name" value="RPA-INTERACTING PROTEIN"/>
    <property type="match status" value="1"/>
</dbReference>
<dbReference type="PANTHER" id="PTHR31742">
    <property type="entry name" value="RPA-INTERACTING PROTEIN RPAIN"/>
    <property type="match status" value="1"/>
</dbReference>
<dbReference type="Pfam" id="PF14768">
    <property type="entry name" value="RPA_interact_C"/>
    <property type="match status" value="1"/>
</dbReference>
<dbReference type="Pfam" id="PF14767">
    <property type="entry name" value="RPA_interact_M"/>
    <property type="match status" value="1"/>
</dbReference>
<dbReference type="Pfam" id="PF14766">
    <property type="entry name" value="RPA_interact_N"/>
    <property type="match status" value="1"/>
</dbReference>
<evidence type="ECO:0000269" key="1">
    <source>
    </source>
</evidence>
<evidence type="ECO:0000305" key="2"/>
<sequence length="226" mass="25775">MEAERRHRALYKGTTPPWKETYRKRCVERLKRNRSKLLDKFRQVGERIHGGVGGSFLVQEVMEEEWKAMQSENGSFPSMWKKEAFSQALNIMRDPDELATLEEIKQELLLEEKAMIEEFENILQFEEQCLDSVVELSTGDQIVCPVCNRNYLTVTSCFIVCQCGVYINTQSQGMSIEKLHSLLESSLTSHGYHCTKLPVFSVATELGGAASLFMSCQECDAMVVIL</sequence>
<proteinExistence type="evidence at protein level"/>
<feature type="chain" id="PRO_0000076302" description="RPA-interacting protein A">
    <location>
        <begin position="1"/>
        <end position="226"/>
    </location>
</feature>
<feature type="zinc finger region" description="RIP-type">
    <location>
        <begin position="144"/>
        <end position="219"/>
    </location>
</feature>
<feature type="region of interest" description="Interaction with importin beta">
    <location>
        <begin position="1"/>
        <end position="45"/>
    </location>
</feature>
<feature type="region of interest" description="Interaction with RPA1" evidence="1">
    <location>
        <begin position="49"/>
        <end position="171"/>
    </location>
</feature>
<feature type="sequence conflict" description="In Ref. 2; AAH73732." evidence="2" ref="2">
    <original>Q</original>
    <variation>R</variation>
    <location>
        <position position="172"/>
    </location>
</feature>
<comment type="function">
    <text evidence="1">Mediates the import of RPA complex into the nucleus, via its interaction with importin beta.</text>
</comment>
<comment type="subunit">
    <text evidence="1">Interacts directly with the rpa1 subunit of RPA complex. Interacts with importin beta, but not with importin alpha. Forms a complex with the RPA complex and importin beta, which is dissociated by Ran-GTP.</text>
</comment>
<comment type="subcellular location">
    <subcellularLocation>
        <location evidence="1">Nucleus</location>
    </subcellularLocation>
</comment>